<sequence>MSKAREIRTKIASIKNTQKITRAMELVAASKMRKAQDRMAISRPYASKIRKVISHVAASHAEYPHPYLQQRENIKRVGYIIVTTDRGLCGGLNVNLFRTAIADMKKWQADNIGMDLCVIGRKGEAFFRRYGGNVLAVADHLGDAPEVQDIIGIVKVMLDQYDKQQIDAIYIATNEFVNTMVQKPLVRQLLPLKTDEEEVEGGYWDYIYEPDESKDLLEMLLVRYIESQVYQAVIENIACEQSARMVAMKNATENAGQLIDELRLIYNKARQAGITREIAEIVAGAAAVE</sequence>
<reference key="1">
    <citation type="journal article" date="2009" name="Infect. Immun.">
        <title>Comparative genomics reveal extensive transposon-mediated genomic plasticity and diversity among potential effector proteins within the genus Coxiella.</title>
        <authorList>
            <person name="Beare P.A."/>
            <person name="Unsworth N."/>
            <person name="Andoh M."/>
            <person name="Voth D.E."/>
            <person name="Omsland A."/>
            <person name="Gilk S.D."/>
            <person name="Williams K.P."/>
            <person name="Sobral B.W."/>
            <person name="Kupko J.J. III"/>
            <person name="Porcella S.F."/>
            <person name="Samuel J.E."/>
            <person name="Heinzen R.A."/>
        </authorList>
    </citation>
    <scope>NUCLEOTIDE SEQUENCE [LARGE SCALE GENOMIC DNA]</scope>
    <source>
        <strain>CbuK_Q154</strain>
    </source>
</reference>
<comment type="function">
    <text evidence="1">Produces ATP from ADP in the presence of a proton gradient across the membrane. The gamma chain is believed to be important in regulating ATPase activity and the flow of protons through the CF(0) complex.</text>
</comment>
<comment type="subunit">
    <text evidence="1">F-type ATPases have 2 components, CF(1) - the catalytic core - and CF(0) - the membrane proton channel. CF(1) has five subunits: alpha(3), beta(3), gamma(1), delta(1), epsilon(1). CF(0) has three main subunits: a, b and c.</text>
</comment>
<comment type="subcellular location">
    <subcellularLocation>
        <location evidence="1">Cell inner membrane</location>
        <topology evidence="1">Peripheral membrane protein</topology>
    </subcellularLocation>
</comment>
<comment type="similarity">
    <text evidence="1">Belongs to the ATPase gamma chain family.</text>
</comment>
<name>ATPG_COXB1</name>
<feature type="chain" id="PRO_1000134131" description="ATP synthase gamma chain">
    <location>
        <begin position="1"/>
        <end position="289"/>
    </location>
</feature>
<keyword id="KW-0066">ATP synthesis</keyword>
<keyword id="KW-0997">Cell inner membrane</keyword>
<keyword id="KW-1003">Cell membrane</keyword>
<keyword id="KW-0139">CF(1)</keyword>
<keyword id="KW-0375">Hydrogen ion transport</keyword>
<keyword id="KW-0406">Ion transport</keyword>
<keyword id="KW-0472">Membrane</keyword>
<keyword id="KW-0813">Transport</keyword>
<proteinExistence type="inferred from homology"/>
<accession>B6J962</accession>
<gene>
    <name evidence="1" type="primary">atpG</name>
    <name type="ordered locus">CbuK_0052</name>
</gene>
<protein>
    <recommendedName>
        <fullName evidence="1">ATP synthase gamma chain</fullName>
    </recommendedName>
    <alternativeName>
        <fullName evidence="1">ATP synthase F1 sector gamma subunit</fullName>
    </alternativeName>
    <alternativeName>
        <fullName evidence="1">F-ATPase gamma subunit</fullName>
    </alternativeName>
</protein>
<evidence type="ECO:0000255" key="1">
    <source>
        <dbReference type="HAMAP-Rule" id="MF_00815"/>
    </source>
</evidence>
<dbReference type="EMBL" id="CP001020">
    <property type="protein sequence ID" value="ACJ19379.1"/>
    <property type="molecule type" value="Genomic_DNA"/>
</dbReference>
<dbReference type="RefSeq" id="WP_005770036.1">
    <property type="nucleotide sequence ID" value="NC_011528.1"/>
</dbReference>
<dbReference type="SMR" id="B6J962"/>
<dbReference type="KEGG" id="cbc:CbuK_0052"/>
<dbReference type="HOGENOM" id="CLU_050669_0_1_6"/>
<dbReference type="GO" id="GO:0005886">
    <property type="term" value="C:plasma membrane"/>
    <property type="evidence" value="ECO:0007669"/>
    <property type="project" value="UniProtKB-SubCell"/>
</dbReference>
<dbReference type="GO" id="GO:0045259">
    <property type="term" value="C:proton-transporting ATP synthase complex"/>
    <property type="evidence" value="ECO:0007669"/>
    <property type="project" value="UniProtKB-KW"/>
</dbReference>
<dbReference type="GO" id="GO:0005524">
    <property type="term" value="F:ATP binding"/>
    <property type="evidence" value="ECO:0007669"/>
    <property type="project" value="UniProtKB-UniRule"/>
</dbReference>
<dbReference type="GO" id="GO:0046933">
    <property type="term" value="F:proton-transporting ATP synthase activity, rotational mechanism"/>
    <property type="evidence" value="ECO:0007669"/>
    <property type="project" value="UniProtKB-UniRule"/>
</dbReference>
<dbReference type="GO" id="GO:0042777">
    <property type="term" value="P:proton motive force-driven plasma membrane ATP synthesis"/>
    <property type="evidence" value="ECO:0007669"/>
    <property type="project" value="UniProtKB-UniRule"/>
</dbReference>
<dbReference type="CDD" id="cd12151">
    <property type="entry name" value="F1-ATPase_gamma"/>
    <property type="match status" value="1"/>
</dbReference>
<dbReference type="FunFam" id="1.10.287.80:FF:000005">
    <property type="entry name" value="ATP synthase gamma chain"/>
    <property type="match status" value="1"/>
</dbReference>
<dbReference type="FunFam" id="3.40.1380.10:FF:000006">
    <property type="entry name" value="ATP synthase gamma chain"/>
    <property type="match status" value="1"/>
</dbReference>
<dbReference type="Gene3D" id="3.40.1380.10">
    <property type="match status" value="1"/>
</dbReference>
<dbReference type="Gene3D" id="1.10.287.80">
    <property type="entry name" value="ATP synthase, gamma subunit, helix hairpin domain"/>
    <property type="match status" value="1"/>
</dbReference>
<dbReference type="HAMAP" id="MF_00815">
    <property type="entry name" value="ATP_synth_gamma_bact"/>
    <property type="match status" value="1"/>
</dbReference>
<dbReference type="InterPro" id="IPR035968">
    <property type="entry name" value="ATP_synth_F1_ATPase_gsu"/>
</dbReference>
<dbReference type="InterPro" id="IPR000131">
    <property type="entry name" value="ATP_synth_F1_gsu"/>
</dbReference>
<dbReference type="InterPro" id="IPR023632">
    <property type="entry name" value="ATP_synth_F1_gsu_CS"/>
</dbReference>
<dbReference type="NCBIfam" id="TIGR01146">
    <property type="entry name" value="ATPsyn_F1gamma"/>
    <property type="match status" value="1"/>
</dbReference>
<dbReference type="NCBIfam" id="NF004144">
    <property type="entry name" value="PRK05621.1-1"/>
    <property type="match status" value="1"/>
</dbReference>
<dbReference type="PANTHER" id="PTHR11693">
    <property type="entry name" value="ATP SYNTHASE GAMMA CHAIN"/>
    <property type="match status" value="1"/>
</dbReference>
<dbReference type="PANTHER" id="PTHR11693:SF22">
    <property type="entry name" value="ATP SYNTHASE SUBUNIT GAMMA, MITOCHONDRIAL"/>
    <property type="match status" value="1"/>
</dbReference>
<dbReference type="Pfam" id="PF00231">
    <property type="entry name" value="ATP-synt"/>
    <property type="match status" value="1"/>
</dbReference>
<dbReference type="PRINTS" id="PR00126">
    <property type="entry name" value="ATPASEGAMMA"/>
</dbReference>
<dbReference type="SUPFAM" id="SSF52943">
    <property type="entry name" value="ATP synthase (F1-ATPase), gamma subunit"/>
    <property type="match status" value="1"/>
</dbReference>
<dbReference type="PROSITE" id="PS00153">
    <property type="entry name" value="ATPASE_GAMMA"/>
    <property type="match status" value="1"/>
</dbReference>
<organism>
    <name type="scientific">Coxiella burnetii (strain CbuK_Q154)</name>
    <name type="common">Coxiella burnetii (strain Q154)</name>
    <dbReference type="NCBI Taxonomy" id="434924"/>
    <lineage>
        <taxon>Bacteria</taxon>
        <taxon>Pseudomonadati</taxon>
        <taxon>Pseudomonadota</taxon>
        <taxon>Gammaproteobacteria</taxon>
        <taxon>Legionellales</taxon>
        <taxon>Coxiellaceae</taxon>
        <taxon>Coxiella</taxon>
    </lineage>
</organism>